<feature type="chain" id="PRO_0000300480" description="Uncharacterized oxidoreductase SH0585">
    <location>
        <begin position="1"/>
        <end position="231"/>
    </location>
</feature>
<feature type="active site" description="Proton acceptor" evidence="1">
    <location>
        <position position="153"/>
    </location>
</feature>
<feature type="binding site" evidence="1">
    <location>
        <begin position="10"/>
        <end position="34"/>
    </location>
    <ligand>
        <name>NADP(+)</name>
        <dbReference type="ChEBI" id="CHEBI:58349"/>
    </ligand>
</feature>
<feature type="binding site" evidence="1">
    <location>
        <position position="140"/>
    </location>
    <ligand>
        <name>substrate</name>
    </ligand>
</feature>
<protein>
    <recommendedName>
        <fullName>Uncharacterized oxidoreductase SH0585</fullName>
        <ecNumber>1.-.-.-</ecNumber>
    </recommendedName>
</protein>
<organism>
    <name type="scientific">Staphylococcus haemolyticus (strain JCSC1435)</name>
    <dbReference type="NCBI Taxonomy" id="279808"/>
    <lineage>
        <taxon>Bacteria</taxon>
        <taxon>Bacillati</taxon>
        <taxon>Bacillota</taxon>
        <taxon>Bacilli</taxon>
        <taxon>Bacillales</taxon>
        <taxon>Staphylococcaceae</taxon>
        <taxon>Staphylococcus</taxon>
    </lineage>
</organism>
<reference key="1">
    <citation type="journal article" date="2005" name="J. Bacteriol.">
        <title>Whole-genome sequencing of Staphylococcus haemolyticus uncovers the extreme plasticity of its genome and the evolution of human-colonizing staphylococcal species.</title>
        <authorList>
            <person name="Takeuchi F."/>
            <person name="Watanabe S."/>
            <person name="Baba T."/>
            <person name="Yuzawa H."/>
            <person name="Ito T."/>
            <person name="Morimoto Y."/>
            <person name="Kuroda M."/>
            <person name="Cui L."/>
            <person name="Takahashi M."/>
            <person name="Ankai A."/>
            <person name="Baba S."/>
            <person name="Fukui S."/>
            <person name="Lee J.C."/>
            <person name="Hiramatsu K."/>
        </authorList>
    </citation>
    <scope>NUCLEOTIDE SEQUENCE [LARGE SCALE GENOMIC DNA]</scope>
    <source>
        <strain>JCSC1435</strain>
    </source>
</reference>
<dbReference type="EC" id="1.-.-.-"/>
<dbReference type="EMBL" id="AP006716">
    <property type="protein sequence ID" value="BAE03894.1"/>
    <property type="molecule type" value="Genomic_DNA"/>
</dbReference>
<dbReference type="RefSeq" id="WP_011274910.1">
    <property type="nucleotide sequence ID" value="NC_007168.1"/>
</dbReference>
<dbReference type="SMR" id="Q4L8Y1"/>
<dbReference type="KEGG" id="sha:SH0585"/>
<dbReference type="eggNOG" id="COG4221">
    <property type="taxonomic scope" value="Bacteria"/>
</dbReference>
<dbReference type="HOGENOM" id="CLU_010194_2_1_9"/>
<dbReference type="OrthoDB" id="9775296at2"/>
<dbReference type="Proteomes" id="UP000000543">
    <property type="component" value="Chromosome"/>
</dbReference>
<dbReference type="GO" id="GO:0016491">
    <property type="term" value="F:oxidoreductase activity"/>
    <property type="evidence" value="ECO:0007669"/>
    <property type="project" value="UniProtKB-KW"/>
</dbReference>
<dbReference type="FunFam" id="3.40.50.720:FF:000047">
    <property type="entry name" value="NADP-dependent L-serine/L-allo-threonine dehydrogenase"/>
    <property type="match status" value="1"/>
</dbReference>
<dbReference type="Gene3D" id="3.40.50.720">
    <property type="entry name" value="NAD(P)-binding Rossmann-like Domain"/>
    <property type="match status" value="1"/>
</dbReference>
<dbReference type="InterPro" id="IPR036291">
    <property type="entry name" value="NAD(P)-bd_dom_sf"/>
</dbReference>
<dbReference type="InterPro" id="IPR002347">
    <property type="entry name" value="SDR_fam"/>
</dbReference>
<dbReference type="PANTHER" id="PTHR43115">
    <property type="entry name" value="DEHYDROGENASE/REDUCTASE SDR FAMILY MEMBER 11"/>
    <property type="match status" value="1"/>
</dbReference>
<dbReference type="PANTHER" id="PTHR43115:SF4">
    <property type="entry name" value="DEHYDROGENASE_REDUCTASE SDR FAMILY MEMBER 11"/>
    <property type="match status" value="1"/>
</dbReference>
<dbReference type="Pfam" id="PF00106">
    <property type="entry name" value="adh_short"/>
    <property type="match status" value="1"/>
</dbReference>
<dbReference type="PRINTS" id="PR00081">
    <property type="entry name" value="GDHRDH"/>
</dbReference>
<dbReference type="PRINTS" id="PR00080">
    <property type="entry name" value="SDRFAMILY"/>
</dbReference>
<dbReference type="SMART" id="SM00822">
    <property type="entry name" value="PKS_KR"/>
    <property type="match status" value="1"/>
</dbReference>
<dbReference type="SUPFAM" id="SSF51735">
    <property type="entry name" value="NAD(P)-binding Rossmann-fold domains"/>
    <property type="match status" value="1"/>
</dbReference>
<sequence length="231" mass="24679">MTELNGRVAIITGASSGIGAATAKALEKQGVKVVLAGRSHDKLNTLAKDMNEDNIHIVPTDVTNQVEVDALVAKVIDVFGHVDIFVNCAGVMRSSKITDYQVESWDSMVDTNIKGLLYSLNAILPKFEAQGSGHVVNLASISANEVSKESALYSATKSAVLMIFNGLEKELAKTGIKTTSILPGMVDTPMTERSDFGGRKKLDPENIADAIIYALTQPAHVNVNEVTVRPV</sequence>
<accession>Q4L8Y1</accession>
<name>Y0585_STAHJ</name>
<evidence type="ECO:0000250" key="1"/>
<evidence type="ECO:0000305" key="2"/>
<proteinExistence type="inferred from homology"/>
<gene>
    <name type="ordered locus">SH0585</name>
</gene>
<keyword id="KW-0560">Oxidoreductase</keyword>
<comment type="similarity">
    <text evidence="2">Belongs to the short-chain dehydrogenases/reductases (SDR) family.</text>
</comment>